<reference key="1">
    <citation type="journal article" date="1996" name="DNA Res.">
        <title>A 570-kb DNA sequence of the Escherichia coli K-12 genome corresponding to the 28.0-40.1 min region on the linkage map.</title>
        <authorList>
            <person name="Aiba H."/>
            <person name="Baba T."/>
            <person name="Fujita K."/>
            <person name="Hayashi K."/>
            <person name="Inada T."/>
            <person name="Isono K."/>
            <person name="Itoh T."/>
            <person name="Kasai H."/>
            <person name="Kashimoto K."/>
            <person name="Kimura S."/>
            <person name="Kitakawa M."/>
            <person name="Kitagawa M."/>
            <person name="Makino K."/>
            <person name="Miki T."/>
            <person name="Mizobuchi K."/>
            <person name="Mori H."/>
            <person name="Mori T."/>
            <person name="Motomura K."/>
            <person name="Nakade S."/>
            <person name="Nakamura Y."/>
            <person name="Nashimoto H."/>
            <person name="Nishio Y."/>
            <person name="Oshima T."/>
            <person name="Saito N."/>
            <person name="Sampei G."/>
            <person name="Seki Y."/>
            <person name="Sivasundaram S."/>
            <person name="Tagami H."/>
            <person name="Takeda J."/>
            <person name="Takemoto K."/>
            <person name="Takeuchi Y."/>
            <person name="Wada C."/>
            <person name="Yamamoto Y."/>
            <person name="Horiuchi T."/>
        </authorList>
    </citation>
    <scope>NUCLEOTIDE SEQUENCE [LARGE SCALE GENOMIC DNA]</scope>
    <source>
        <strain>K12 / W3110 / ATCC 27325 / DSM 5911</strain>
    </source>
</reference>
<reference key="2">
    <citation type="journal article" date="1997" name="Science">
        <title>The complete genome sequence of Escherichia coli K-12.</title>
        <authorList>
            <person name="Blattner F.R."/>
            <person name="Plunkett G. III"/>
            <person name="Bloch C.A."/>
            <person name="Perna N.T."/>
            <person name="Burland V."/>
            <person name="Riley M."/>
            <person name="Collado-Vides J."/>
            <person name="Glasner J.D."/>
            <person name="Rode C.K."/>
            <person name="Mayhew G.F."/>
            <person name="Gregor J."/>
            <person name="Davis N.W."/>
            <person name="Kirkpatrick H.A."/>
            <person name="Goeden M.A."/>
            <person name="Rose D.J."/>
            <person name="Mau B."/>
            <person name="Shao Y."/>
        </authorList>
    </citation>
    <scope>NUCLEOTIDE SEQUENCE [LARGE SCALE GENOMIC DNA]</scope>
    <source>
        <strain>K12 / MG1655 / ATCC 47076</strain>
    </source>
</reference>
<reference key="3">
    <citation type="journal article" date="2006" name="Mol. Syst. Biol.">
        <title>Highly accurate genome sequences of Escherichia coli K-12 strains MG1655 and W3110.</title>
        <authorList>
            <person name="Hayashi K."/>
            <person name="Morooka N."/>
            <person name="Yamamoto Y."/>
            <person name="Fujita K."/>
            <person name="Isono K."/>
            <person name="Choi S."/>
            <person name="Ohtsubo E."/>
            <person name="Baba T."/>
            <person name="Wanner B.L."/>
            <person name="Mori H."/>
            <person name="Horiuchi T."/>
        </authorList>
    </citation>
    <scope>NUCLEOTIDE SEQUENCE [LARGE SCALE GENOMIC DNA]</scope>
    <source>
        <strain>K12 / W3110 / ATCC 27325 / DSM 5911</strain>
    </source>
</reference>
<reference key="4">
    <citation type="journal article" date="2003" name="EMBO J.">
        <title>A reducing system of the superoxide sensor SoxR in Escherichia coli.</title>
        <authorList>
            <person name="Koo M.S."/>
            <person name="Lee J.H."/>
            <person name="Rah S.Y."/>
            <person name="Yeo W.S."/>
            <person name="Lee J.W."/>
            <person name="Lee K.L."/>
            <person name="Koh Y.S."/>
            <person name="Kang S.O."/>
            <person name="Roe J.H."/>
        </authorList>
    </citation>
    <scope>FUNCTION</scope>
    <scope>SUBUNIT</scope>
    <scope>GENE NAME</scope>
</reference>
<protein>
    <recommendedName>
        <fullName evidence="1 5">Ion-translocating oxidoreductase complex subunit C</fullName>
        <ecNumber evidence="1 5">7.-.-.-</ecNumber>
    </recommendedName>
    <alternativeName>
        <fullName evidence="1 5">Rsx electron transport complex subunit C</fullName>
    </alternativeName>
</protein>
<accession>P77611</accession>
<dbReference type="EC" id="7.-.-.-" evidence="1 5"/>
<dbReference type="EMBL" id="U00096">
    <property type="protein sequence ID" value="AAC74701.1"/>
    <property type="molecule type" value="Genomic_DNA"/>
</dbReference>
<dbReference type="EMBL" id="AP009048">
    <property type="protein sequence ID" value="BAA15384.1"/>
    <property type="molecule type" value="Genomic_DNA"/>
</dbReference>
<dbReference type="PIR" id="G64919">
    <property type="entry name" value="G64919"/>
</dbReference>
<dbReference type="RefSeq" id="NP_416146.1">
    <property type="nucleotide sequence ID" value="NC_000913.3"/>
</dbReference>
<dbReference type="RefSeq" id="WP_000915778.1">
    <property type="nucleotide sequence ID" value="NZ_SSUW01000005.1"/>
</dbReference>
<dbReference type="SMR" id="P77611"/>
<dbReference type="BioGRID" id="4261728">
    <property type="interactions" value="157"/>
</dbReference>
<dbReference type="DIP" id="DIP-28084N"/>
<dbReference type="FunCoup" id="P77611">
    <property type="interactions" value="76"/>
</dbReference>
<dbReference type="IntAct" id="P77611">
    <property type="interactions" value="4"/>
</dbReference>
<dbReference type="STRING" id="511145.b1629"/>
<dbReference type="TCDB" id="3.D.6.1.4">
    <property type="family name" value="the ion (h(+) or na(+))-translocating nadh:ferredoxin oxidoreductase (nfo or rnf) family"/>
</dbReference>
<dbReference type="jPOST" id="P77611"/>
<dbReference type="PaxDb" id="511145-b1629"/>
<dbReference type="EnsemblBacteria" id="AAC74701">
    <property type="protein sequence ID" value="AAC74701"/>
    <property type="gene ID" value="b1629"/>
</dbReference>
<dbReference type="GeneID" id="946137"/>
<dbReference type="KEGG" id="ecj:JW1621"/>
<dbReference type="KEGG" id="eco:b1629"/>
<dbReference type="KEGG" id="ecoc:C3026_09360"/>
<dbReference type="PATRIC" id="fig|1411691.4.peg.632"/>
<dbReference type="EchoBASE" id="EB3694"/>
<dbReference type="eggNOG" id="COG4656">
    <property type="taxonomic scope" value="Bacteria"/>
</dbReference>
<dbReference type="HOGENOM" id="CLU_010808_2_1_6"/>
<dbReference type="InParanoid" id="P77611"/>
<dbReference type="OMA" id="QQLYWYS"/>
<dbReference type="OrthoDB" id="9767754at2"/>
<dbReference type="PhylomeDB" id="P77611"/>
<dbReference type="BioCyc" id="EcoCyc:G6873-MONOMER"/>
<dbReference type="PRO" id="PR:P77611"/>
<dbReference type="Proteomes" id="UP000000625">
    <property type="component" value="Chromosome"/>
</dbReference>
<dbReference type="GO" id="GO:1990204">
    <property type="term" value="C:oxidoreductase complex"/>
    <property type="evidence" value="ECO:0000314"/>
    <property type="project" value="EcoCyc"/>
</dbReference>
<dbReference type="GO" id="GO:0098797">
    <property type="term" value="C:plasma membrane protein complex"/>
    <property type="evidence" value="ECO:0000314"/>
    <property type="project" value="EcoCyc"/>
</dbReference>
<dbReference type="GO" id="GO:0051539">
    <property type="term" value="F:4 iron, 4 sulfur cluster binding"/>
    <property type="evidence" value="ECO:0007669"/>
    <property type="project" value="UniProtKB-KW"/>
</dbReference>
<dbReference type="GO" id="GO:0009055">
    <property type="term" value="F:electron transfer activity"/>
    <property type="evidence" value="ECO:0007669"/>
    <property type="project" value="InterPro"/>
</dbReference>
<dbReference type="GO" id="GO:0046872">
    <property type="term" value="F:metal ion binding"/>
    <property type="evidence" value="ECO:0007669"/>
    <property type="project" value="UniProtKB-KW"/>
</dbReference>
<dbReference type="GO" id="GO:0022900">
    <property type="term" value="P:electron transport chain"/>
    <property type="evidence" value="ECO:0007669"/>
    <property type="project" value="UniProtKB-UniRule"/>
</dbReference>
<dbReference type="Gene3D" id="3.30.70.20">
    <property type="match status" value="1"/>
</dbReference>
<dbReference type="Gene3D" id="3.40.50.11540">
    <property type="entry name" value="NADH-ubiquinone oxidoreductase 51kDa subunit"/>
    <property type="match status" value="1"/>
</dbReference>
<dbReference type="HAMAP" id="MF_00461">
    <property type="entry name" value="RsxC_RnfC"/>
    <property type="match status" value="1"/>
</dbReference>
<dbReference type="InterPro" id="IPR017896">
    <property type="entry name" value="4Fe4S_Fe-S-bd"/>
</dbReference>
<dbReference type="InterPro" id="IPR017900">
    <property type="entry name" value="4Fe4S_Fe_S_CS"/>
</dbReference>
<dbReference type="InterPro" id="IPR010208">
    <property type="entry name" value="Ion_transpt_RnfC/RsxC"/>
</dbReference>
<dbReference type="InterPro" id="IPR011538">
    <property type="entry name" value="Nuo51_FMN-bd"/>
</dbReference>
<dbReference type="InterPro" id="IPR037225">
    <property type="entry name" value="Nuo51_FMN-bd_sf"/>
</dbReference>
<dbReference type="InterPro" id="IPR026902">
    <property type="entry name" value="RnfC_N"/>
</dbReference>
<dbReference type="InterPro" id="IPR019554">
    <property type="entry name" value="Soluble_ligand-bd"/>
</dbReference>
<dbReference type="NCBIfam" id="NF003454">
    <property type="entry name" value="PRK05035.1"/>
    <property type="match status" value="1"/>
</dbReference>
<dbReference type="NCBIfam" id="TIGR01945">
    <property type="entry name" value="rnfC"/>
    <property type="match status" value="1"/>
</dbReference>
<dbReference type="PANTHER" id="PTHR43034">
    <property type="entry name" value="ION-TRANSLOCATING OXIDOREDUCTASE COMPLEX SUBUNIT C"/>
    <property type="match status" value="1"/>
</dbReference>
<dbReference type="PANTHER" id="PTHR43034:SF2">
    <property type="entry name" value="ION-TRANSLOCATING OXIDOREDUCTASE COMPLEX SUBUNIT C"/>
    <property type="match status" value="1"/>
</dbReference>
<dbReference type="Pfam" id="PF01512">
    <property type="entry name" value="Complex1_51K"/>
    <property type="match status" value="1"/>
</dbReference>
<dbReference type="Pfam" id="PF12838">
    <property type="entry name" value="Fer4_7"/>
    <property type="match status" value="1"/>
</dbReference>
<dbReference type="Pfam" id="PF13375">
    <property type="entry name" value="RnfC_N"/>
    <property type="match status" value="1"/>
</dbReference>
<dbReference type="Pfam" id="PF10531">
    <property type="entry name" value="SLBB"/>
    <property type="match status" value="1"/>
</dbReference>
<dbReference type="SUPFAM" id="SSF46548">
    <property type="entry name" value="alpha-helical ferredoxin"/>
    <property type="match status" value="1"/>
</dbReference>
<dbReference type="SUPFAM" id="SSF142019">
    <property type="entry name" value="Nqo1 FMN-binding domain-like"/>
    <property type="match status" value="1"/>
</dbReference>
<dbReference type="PROSITE" id="PS00198">
    <property type="entry name" value="4FE4S_FER_1"/>
    <property type="match status" value="2"/>
</dbReference>
<dbReference type="PROSITE" id="PS51379">
    <property type="entry name" value="4FE4S_FER_2"/>
    <property type="match status" value="2"/>
</dbReference>
<proteinExistence type="evidence at protein level"/>
<gene>
    <name evidence="1 4" type="primary">rsxC</name>
    <name type="synonym">rnfC</name>
    <name type="synonym">ydgN</name>
    <name type="ordered locus">b1629</name>
    <name type="ordered locus">JW1621</name>
</gene>
<sequence>MLKLFSAFRKNKIWDFNGGIHPPEMKTQSNGTPLRQVPLAQRFVIPLKQHIGAEGELCVSVGDKVLRGQPLTRGRGKMLPVHAPTSGTVTAIAPHSTAHPSALAELSVIIDADGEDCWIPRDGWADYRTRSREELIERIHQFGVAGLGGAGFPTGVKLQGGGDKIETLIINAAECEPYITADDRLMQDCAAQVVEGIRILAHILQPREILIGIEDNKPQAISMLRAVLADSNDISLRVIPTKYPSGGAKQLTYILTGKQVPHGGRSSDIGVLMQNVGTAYAVKRAVIDGEPITERVVTLTGEAIARPGNVWARLGTPVRHLLNDAGFCPSADQMVIMGGPLMGFTLPWLDVPVVKITNCLLAPSANELGEPQEEQSCIRCSACADACPADLLPQQLYWFSKGQQHDKATTHNIADCIECGACAWVCPSNIPLVQYFRQEKAEIAAIRQEEKRAAEAKARFEARQARLEREKAARLERHKSAAVQPAAKDKDAIAAALARVKEKQAQATQPIVIKAGERPDNSAIIAAREARKAQARAKQAELQQTNDAATVADPRKTAVEAAIARAKARKLEQQQANAEPEQQVDPRKAAVEAAIARAKARKLEQQQANAEPEEQVDPRKAAVEAAIARAKARKLEQQQANAEPEQQVDPRKAAVEAAIARAKARKREQQPANAEPEEQVDPRKAAVEAAIARAKARKLEQQQANAVPEEQVDPRKAAVAAAIARAQAKKAAQQKVVNED</sequence>
<name>RSXC_ECOLI</name>
<evidence type="ECO:0000255" key="1">
    <source>
        <dbReference type="HAMAP-Rule" id="MF_00461"/>
    </source>
</evidence>
<evidence type="ECO:0000256" key="2">
    <source>
        <dbReference type="SAM" id="MobiDB-lite"/>
    </source>
</evidence>
<evidence type="ECO:0000269" key="3">
    <source>
    </source>
</evidence>
<evidence type="ECO:0000303" key="4">
    <source>
    </source>
</evidence>
<evidence type="ECO:0000305" key="5"/>
<evidence type="ECO:0000305" key="6">
    <source>
    </source>
</evidence>
<feature type="chain" id="PRO_0000073205" description="Ion-translocating oxidoreductase complex subunit C">
    <location>
        <begin position="1"/>
        <end position="740"/>
    </location>
</feature>
<feature type="domain" description="4Fe-4S ferredoxin-type 1" evidence="1">
    <location>
        <begin position="369"/>
        <end position="397"/>
    </location>
</feature>
<feature type="domain" description="4Fe-4S ferredoxin-type 2" evidence="1">
    <location>
        <begin position="407"/>
        <end position="436"/>
    </location>
</feature>
<feature type="region of interest" description="Disordered" evidence="2">
    <location>
        <begin position="571"/>
        <end position="590"/>
    </location>
</feature>
<feature type="region of interest" description="Disordered" evidence="2">
    <location>
        <begin position="602"/>
        <end position="716"/>
    </location>
</feature>
<feature type="compositionally biased region" description="Low complexity" evidence="2">
    <location>
        <begin position="573"/>
        <end position="583"/>
    </location>
</feature>
<feature type="compositionally biased region" description="Low complexity" evidence="2">
    <location>
        <begin position="637"/>
        <end position="647"/>
    </location>
</feature>
<feature type="binding site" evidence="1">
    <location>
        <position position="377"/>
    </location>
    <ligand>
        <name>[4Fe-4S] cluster</name>
        <dbReference type="ChEBI" id="CHEBI:49883"/>
        <label>1</label>
    </ligand>
</feature>
<feature type="binding site" evidence="1">
    <location>
        <position position="380"/>
    </location>
    <ligand>
        <name>[4Fe-4S] cluster</name>
        <dbReference type="ChEBI" id="CHEBI:49883"/>
        <label>1</label>
    </ligand>
</feature>
<feature type="binding site" evidence="1">
    <location>
        <position position="383"/>
    </location>
    <ligand>
        <name>[4Fe-4S] cluster</name>
        <dbReference type="ChEBI" id="CHEBI:49883"/>
        <label>1</label>
    </ligand>
</feature>
<feature type="binding site" evidence="1">
    <location>
        <position position="387"/>
    </location>
    <ligand>
        <name>[4Fe-4S] cluster</name>
        <dbReference type="ChEBI" id="CHEBI:49883"/>
        <label>2</label>
    </ligand>
</feature>
<feature type="binding site" evidence="1">
    <location>
        <position position="416"/>
    </location>
    <ligand>
        <name>[4Fe-4S] cluster</name>
        <dbReference type="ChEBI" id="CHEBI:49883"/>
        <label>2</label>
    </ligand>
</feature>
<feature type="binding site" evidence="1">
    <location>
        <position position="419"/>
    </location>
    <ligand>
        <name>[4Fe-4S] cluster</name>
        <dbReference type="ChEBI" id="CHEBI:49883"/>
        <label>2</label>
    </ligand>
</feature>
<feature type="binding site" evidence="1">
    <location>
        <position position="422"/>
    </location>
    <ligand>
        <name>[4Fe-4S] cluster</name>
        <dbReference type="ChEBI" id="CHEBI:49883"/>
        <label>2</label>
    </ligand>
</feature>
<feature type="binding site" evidence="1">
    <location>
        <position position="426"/>
    </location>
    <ligand>
        <name>[4Fe-4S] cluster</name>
        <dbReference type="ChEBI" id="CHEBI:49883"/>
        <label>1</label>
    </ligand>
</feature>
<keyword id="KW-0004">4Fe-4S</keyword>
<keyword id="KW-0997">Cell inner membrane</keyword>
<keyword id="KW-1003">Cell membrane</keyword>
<keyword id="KW-0249">Electron transport</keyword>
<keyword id="KW-0408">Iron</keyword>
<keyword id="KW-0411">Iron-sulfur</keyword>
<keyword id="KW-0472">Membrane</keyword>
<keyword id="KW-0479">Metal-binding</keyword>
<keyword id="KW-1185">Reference proteome</keyword>
<keyword id="KW-0677">Repeat</keyword>
<keyword id="KW-1278">Translocase</keyword>
<keyword id="KW-0813">Transport</keyword>
<comment type="function">
    <text evidence="1 3">Part of a membrane-bound complex that couples electron transfer with translocation of ions across the membrane (By similarity). Required to maintain the reduced state of SoxR. Probably transfers electron from NAD(P)H to SoxR (PubMed:12773378).</text>
</comment>
<comment type="cofactor">
    <cofactor evidence="1">
        <name>[4Fe-4S] cluster</name>
        <dbReference type="ChEBI" id="CHEBI:49883"/>
    </cofactor>
    <text evidence="1">Binds 2 [4Fe-4S] clusters per subunit.</text>
</comment>
<comment type="subunit">
    <text evidence="1 6">The complex is composed of six subunits: RsxA, RsxB, RsxC, RsxD, RsxE and RsxG.</text>
</comment>
<comment type="subcellular location">
    <subcellularLocation>
        <location evidence="1">Cell inner membrane</location>
        <topology evidence="1">Peripheral membrane protein</topology>
    </subcellularLocation>
</comment>
<comment type="similarity">
    <text evidence="1">Belongs to the 4Fe4S bacterial-type ferredoxin family. RnfC subfamily.</text>
</comment>
<organism>
    <name type="scientific">Escherichia coli (strain K12)</name>
    <dbReference type="NCBI Taxonomy" id="83333"/>
    <lineage>
        <taxon>Bacteria</taxon>
        <taxon>Pseudomonadati</taxon>
        <taxon>Pseudomonadota</taxon>
        <taxon>Gammaproteobacteria</taxon>
        <taxon>Enterobacterales</taxon>
        <taxon>Enterobacteriaceae</taxon>
        <taxon>Escherichia</taxon>
    </lineage>
</organism>